<name>NIT2_ASPKW</name>
<accession>G7X8S6</accession>
<accession>A0A0P1DJB4</accession>
<organism>
    <name type="scientific">Aspergillus kawachii (strain NBRC 4308)</name>
    <name type="common">White koji mold</name>
    <name type="synonym">Aspergillus awamori var. kawachi</name>
    <dbReference type="NCBI Taxonomy" id="1033177"/>
    <lineage>
        <taxon>Eukaryota</taxon>
        <taxon>Fungi</taxon>
        <taxon>Dikarya</taxon>
        <taxon>Ascomycota</taxon>
        <taxon>Pezizomycotina</taxon>
        <taxon>Eurotiomycetes</taxon>
        <taxon>Eurotiomycetidae</taxon>
        <taxon>Eurotiales</taxon>
        <taxon>Aspergillaceae</taxon>
        <taxon>Aspergillus</taxon>
        <taxon>Aspergillus subgen. Circumdati</taxon>
    </lineage>
</organism>
<reference key="1">
    <citation type="journal article" date="2016" name="Appl. Microbiol. Biotechnol.">
        <title>Bringing nitrilase sequences from databases to life: the search for novel substrate specificities with a focus on dinitriles.</title>
        <authorList>
            <person name="Vesela A.B."/>
            <person name="Rucka L."/>
            <person name="Kaplan O."/>
            <person name="Pelantova H."/>
            <person name="Nesvera J."/>
            <person name="Patek M."/>
            <person name="Martinkova L."/>
        </authorList>
    </citation>
    <scope>NUCLEOTIDE SEQUENCE [GENOMIC DNA]</scope>
    <scope>FUNCTION</scope>
    <scope>CATALYTIC ACTIVITY</scope>
</reference>
<reference key="2">
    <citation type="journal article" date="2011" name="Eukaryot. Cell">
        <title>Genome sequence of the white koji mold Aspergillus kawachii IFO 4308, used for brewing the Japanese distilled spirit shochu.</title>
        <authorList>
            <person name="Futagami T."/>
            <person name="Mori K."/>
            <person name="Yamashita A."/>
            <person name="Wada S."/>
            <person name="Kajiwara Y."/>
            <person name="Takashita H."/>
            <person name="Omori T."/>
            <person name="Takegawa K."/>
            <person name="Tashiro K."/>
            <person name="Kuhara S."/>
            <person name="Goto M."/>
        </authorList>
    </citation>
    <scope>NUCLEOTIDE SEQUENCE [LARGE SCALE GENOMIC DNA]</scope>
    <source>
        <strain>NBRC 4308</strain>
    </source>
</reference>
<feature type="chain" id="PRO_0000451135" description="Arylacetonitrilase">
    <location>
        <begin position="1"/>
        <end position="328"/>
    </location>
</feature>
<feature type="domain" description="CN hydrolase" evidence="1">
    <location>
        <begin position="5"/>
        <end position="278"/>
    </location>
</feature>
<feature type="active site" description="Proton acceptor" evidence="1">
    <location>
        <position position="45"/>
    </location>
</feature>
<feature type="active site" evidence="1">
    <location>
        <position position="125"/>
    </location>
</feature>
<feature type="active site" description="Nucleophile" evidence="1">
    <location>
        <position position="160"/>
    </location>
</feature>
<gene>
    <name type="primary">nit2</name>
    <name evidence="5" type="ORF">AKAW_01332</name>
</gene>
<dbReference type="EC" id="3.5.5.1" evidence="2"/>
<dbReference type="EC" id="3.5.5.5" evidence="2"/>
<dbReference type="EMBL" id="LN875496">
    <property type="protein sequence ID" value="CTQ87320.1"/>
    <property type="molecule type" value="Genomic_DNA"/>
</dbReference>
<dbReference type="EMBL" id="DF126449">
    <property type="protein sequence ID" value="GAA83217.1"/>
    <property type="molecule type" value="Genomic_DNA"/>
</dbReference>
<dbReference type="SMR" id="G7X8S6"/>
<dbReference type="STRING" id="1033177.G7X8S6"/>
<dbReference type="VEuPathDB" id="FungiDB:AKAW_01332"/>
<dbReference type="eggNOG" id="KOG0805">
    <property type="taxonomic scope" value="Eukaryota"/>
</dbReference>
<dbReference type="InParanoid" id="G7X8S6"/>
<dbReference type="OrthoDB" id="31795at5052"/>
<dbReference type="BRENDA" id="3.5.5.5">
    <property type="organism ID" value="514"/>
</dbReference>
<dbReference type="GO" id="GO:0047428">
    <property type="term" value="F:arylacetonitrilase activity"/>
    <property type="evidence" value="ECO:0007669"/>
    <property type="project" value="UniProtKB-EC"/>
</dbReference>
<dbReference type="GO" id="GO:0016836">
    <property type="term" value="F:hydro-lyase activity"/>
    <property type="evidence" value="ECO:0007669"/>
    <property type="project" value="UniProtKB-ARBA"/>
</dbReference>
<dbReference type="CDD" id="cd07564">
    <property type="entry name" value="nitrilases_CHs"/>
    <property type="match status" value="1"/>
</dbReference>
<dbReference type="FunFam" id="3.60.110.10:FF:000011">
    <property type="entry name" value="Cyanide hydratase"/>
    <property type="match status" value="1"/>
</dbReference>
<dbReference type="Gene3D" id="3.60.110.10">
    <property type="entry name" value="Carbon-nitrogen hydrolase"/>
    <property type="match status" value="1"/>
</dbReference>
<dbReference type="InterPro" id="IPR003010">
    <property type="entry name" value="C-N_Hydrolase"/>
</dbReference>
<dbReference type="InterPro" id="IPR036526">
    <property type="entry name" value="C-N_Hydrolase_sf"/>
</dbReference>
<dbReference type="InterPro" id="IPR000132">
    <property type="entry name" value="Nitrilase/CN_hydratase_CS"/>
</dbReference>
<dbReference type="InterPro" id="IPR044149">
    <property type="entry name" value="Nitrilases_CHs"/>
</dbReference>
<dbReference type="PANTHER" id="PTHR46044:SF14">
    <property type="entry name" value="ARYLACETONITRILASE"/>
    <property type="match status" value="1"/>
</dbReference>
<dbReference type="PANTHER" id="PTHR46044">
    <property type="entry name" value="NITRILASE"/>
    <property type="match status" value="1"/>
</dbReference>
<dbReference type="Pfam" id="PF00795">
    <property type="entry name" value="CN_hydrolase"/>
    <property type="match status" value="1"/>
</dbReference>
<dbReference type="SUPFAM" id="SSF56317">
    <property type="entry name" value="Carbon-nitrogen hydrolase"/>
    <property type="match status" value="1"/>
</dbReference>
<dbReference type="PROSITE" id="PS50263">
    <property type="entry name" value="CN_HYDROLASE"/>
    <property type="match status" value="1"/>
</dbReference>
<dbReference type="PROSITE" id="PS00920">
    <property type="entry name" value="NITRIL_CHT_1"/>
    <property type="match status" value="1"/>
</dbReference>
<dbReference type="PROSITE" id="PS00921">
    <property type="entry name" value="NITRIL_CHT_2"/>
    <property type="match status" value="1"/>
</dbReference>
<sequence length="328" mass="35821">MSSQVRVAVTQAEPVWLDLDATVKKTCDLIVEAAANGAQLVAFPECWIPGYPAWIWTRPVDMRLSSTYIQNSLKIDSPQMASIQKCAAENKIVVVLGFSENLHNSLYISQAIIGSDGKILTTRKKIKPTHMERTIFGDSFGDCLQSVVDTSAGRVGALSCWEHIQPLLKYHTYAQREQIHVAAWPPLFPHNEDGSLFSMSSEGTSSIARTYAIESQSFVLHTTTVIGQSGVDRMATHGGALMSTPGGGCSAIFGPDGRQLSQPIPSTEEGIIYADLDLDQIYHSKAFVDVCGHYSRPDLLWLGVEGSVKRHVRENAATVAAEAEQQEQ</sequence>
<keyword id="KW-0378">Hydrolase</keyword>
<proteinExistence type="evidence at protein level"/>
<comment type="function">
    <text evidence="2">Nitrilase that hydrolyzes preferentially phenylacetonitrile and (R,S)-mandelonitrile. Also acts on dinitriles like phenylenediacetonitriles (PDAs) 1,2-PDA, 1,3-PDA, and 1,4-PDA, and cyanophenyl acetonitriles (CPAs) 2-CPA and 4-CPA.</text>
</comment>
<comment type="catalytic activity">
    <reaction evidence="2">
        <text>a nitrile + 2 H2O = a carboxylate + NH4(+)</text>
        <dbReference type="Rhea" id="RHEA:21724"/>
        <dbReference type="ChEBI" id="CHEBI:15377"/>
        <dbReference type="ChEBI" id="CHEBI:18379"/>
        <dbReference type="ChEBI" id="CHEBI:28938"/>
        <dbReference type="ChEBI" id="CHEBI:29067"/>
        <dbReference type="EC" id="3.5.5.1"/>
    </reaction>
</comment>
<comment type="catalytic activity">
    <reaction evidence="2">
        <text>4-chlorophenylacetonitrile + 2 H2O = 4-chlorophenylacetate + NH4(+)</text>
        <dbReference type="Rhea" id="RHEA:20657"/>
        <dbReference type="ChEBI" id="CHEBI:15377"/>
        <dbReference type="ChEBI" id="CHEBI:16237"/>
        <dbReference type="ChEBI" id="CHEBI:17346"/>
        <dbReference type="ChEBI" id="CHEBI:28938"/>
        <dbReference type="EC" id="3.5.5.5"/>
    </reaction>
</comment>
<comment type="similarity">
    <text evidence="4">Belongs to the carbon-nitrogen hydrolase superfamily. Nitrilase family.</text>
</comment>
<evidence type="ECO:0000255" key="1">
    <source>
        <dbReference type="PROSITE-ProRule" id="PRU00054"/>
    </source>
</evidence>
<evidence type="ECO:0000269" key="2">
    <source>
    </source>
</evidence>
<evidence type="ECO:0000303" key="3">
    <source>
    </source>
</evidence>
<evidence type="ECO:0000305" key="4"/>
<evidence type="ECO:0000312" key="5">
    <source>
        <dbReference type="EMBL" id="GAA83217.1"/>
    </source>
</evidence>
<protein>
    <recommendedName>
        <fullName evidence="3">Arylacetonitrilase</fullName>
        <ecNumber evidence="2">3.5.5.1</ecNumber>
        <ecNumber evidence="2">3.5.5.5</ecNumber>
    </recommendedName>
    <alternativeName>
        <fullName evidence="3">NitAk2</fullName>
    </alternativeName>
</protein>